<sequence length="359" mass="39750">MRKIIHIDMDCYFAAVEMRDFPEYRGKPLAVGGSRVQRGVISTCNYEARKFGVRSAMATGYALKLCPDLILVPGRMQVYKEVSQQIRAIFSRYTELIEPLSLDEAYLDVSDCKLFKGSATLIAEAIRRDILAETGLTASAGVAPIKFLAKVASDLNKPNGQCVIPPDEVPEFVKSLSLRKIPGVGKVTAEKLSSLGLNTCADVQAYPKQELIARFGKFGAVLVERAHGIDDRGISVSRERKSVGVETTLAQDIYTLEQCQQVMPGLIQELSSRLGRSAKGRQIHKQVVKLKFNDFKQTTIEHRSDEVSVVMFYELLSQAMARQEGRGIRLLGVSVGLAESKDTLAPLMVRETKQLDFVF</sequence>
<reference key="1">
    <citation type="submission" date="2006-08" db="EMBL/GenBank/DDBJ databases">
        <title>Complete sequence of chromosome 1 of Shewanella sp. MR-7.</title>
        <authorList>
            <person name="Copeland A."/>
            <person name="Lucas S."/>
            <person name="Lapidus A."/>
            <person name="Barry K."/>
            <person name="Detter J.C."/>
            <person name="Glavina del Rio T."/>
            <person name="Hammon N."/>
            <person name="Israni S."/>
            <person name="Dalin E."/>
            <person name="Tice H."/>
            <person name="Pitluck S."/>
            <person name="Kiss H."/>
            <person name="Brettin T."/>
            <person name="Bruce D."/>
            <person name="Han C."/>
            <person name="Tapia R."/>
            <person name="Gilna P."/>
            <person name="Schmutz J."/>
            <person name="Larimer F."/>
            <person name="Land M."/>
            <person name="Hauser L."/>
            <person name="Kyrpides N."/>
            <person name="Mikhailova N."/>
            <person name="Nealson K."/>
            <person name="Konstantinidis K."/>
            <person name="Klappenbach J."/>
            <person name="Tiedje J."/>
            <person name="Richardson P."/>
        </authorList>
    </citation>
    <scope>NUCLEOTIDE SEQUENCE [LARGE SCALE GENOMIC DNA]</scope>
    <source>
        <strain>MR-7</strain>
    </source>
</reference>
<gene>
    <name evidence="1" type="primary">dinB</name>
    <name type="ordered locus">Shewmr7_0985</name>
</gene>
<organism>
    <name type="scientific">Shewanella sp. (strain MR-7)</name>
    <dbReference type="NCBI Taxonomy" id="60481"/>
    <lineage>
        <taxon>Bacteria</taxon>
        <taxon>Pseudomonadati</taxon>
        <taxon>Pseudomonadota</taxon>
        <taxon>Gammaproteobacteria</taxon>
        <taxon>Alteromonadales</taxon>
        <taxon>Shewanellaceae</taxon>
        <taxon>Shewanella</taxon>
    </lineage>
</organism>
<protein>
    <recommendedName>
        <fullName evidence="1">DNA polymerase IV</fullName>
        <shortName evidence="1">Pol IV</shortName>
        <ecNumber evidence="1">2.7.7.7</ecNumber>
    </recommendedName>
</protein>
<feature type="chain" id="PRO_1000084938" description="DNA polymerase IV">
    <location>
        <begin position="1"/>
        <end position="359"/>
    </location>
</feature>
<feature type="domain" description="UmuC" evidence="1">
    <location>
        <begin position="4"/>
        <end position="185"/>
    </location>
</feature>
<feature type="active site" evidence="1">
    <location>
        <position position="104"/>
    </location>
</feature>
<feature type="binding site" evidence="1">
    <location>
        <position position="8"/>
    </location>
    <ligand>
        <name>Mg(2+)</name>
        <dbReference type="ChEBI" id="CHEBI:18420"/>
    </ligand>
</feature>
<feature type="binding site" evidence="1">
    <location>
        <position position="103"/>
    </location>
    <ligand>
        <name>Mg(2+)</name>
        <dbReference type="ChEBI" id="CHEBI:18420"/>
    </ligand>
</feature>
<feature type="site" description="Substrate discrimination" evidence="1">
    <location>
        <position position="13"/>
    </location>
</feature>
<accession>Q0HY21</accession>
<keyword id="KW-0963">Cytoplasm</keyword>
<keyword id="KW-0227">DNA damage</keyword>
<keyword id="KW-0234">DNA repair</keyword>
<keyword id="KW-0235">DNA replication</keyword>
<keyword id="KW-0238">DNA-binding</keyword>
<keyword id="KW-0239">DNA-directed DNA polymerase</keyword>
<keyword id="KW-0460">Magnesium</keyword>
<keyword id="KW-0479">Metal-binding</keyword>
<keyword id="KW-0515">Mutator protein</keyword>
<keyword id="KW-0548">Nucleotidyltransferase</keyword>
<keyword id="KW-0808">Transferase</keyword>
<dbReference type="EC" id="2.7.7.7" evidence="1"/>
<dbReference type="EMBL" id="CP000444">
    <property type="protein sequence ID" value="ABI41984.1"/>
    <property type="molecule type" value="Genomic_DNA"/>
</dbReference>
<dbReference type="SMR" id="Q0HY21"/>
<dbReference type="KEGG" id="shm:Shewmr7_0985"/>
<dbReference type="HOGENOM" id="CLU_012348_1_2_6"/>
<dbReference type="GO" id="GO:0005829">
    <property type="term" value="C:cytosol"/>
    <property type="evidence" value="ECO:0007669"/>
    <property type="project" value="TreeGrafter"/>
</dbReference>
<dbReference type="GO" id="GO:0003684">
    <property type="term" value="F:damaged DNA binding"/>
    <property type="evidence" value="ECO:0007669"/>
    <property type="project" value="InterPro"/>
</dbReference>
<dbReference type="GO" id="GO:0003887">
    <property type="term" value="F:DNA-directed DNA polymerase activity"/>
    <property type="evidence" value="ECO:0007669"/>
    <property type="project" value="UniProtKB-UniRule"/>
</dbReference>
<dbReference type="GO" id="GO:0000287">
    <property type="term" value="F:magnesium ion binding"/>
    <property type="evidence" value="ECO:0007669"/>
    <property type="project" value="UniProtKB-UniRule"/>
</dbReference>
<dbReference type="GO" id="GO:0006261">
    <property type="term" value="P:DNA-templated DNA replication"/>
    <property type="evidence" value="ECO:0007669"/>
    <property type="project" value="UniProtKB-UniRule"/>
</dbReference>
<dbReference type="GO" id="GO:0042276">
    <property type="term" value="P:error-prone translesion synthesis"/>
    <property type="evidence" value="ECO:0007669"/>
    <property type="project" value="TreeGrafter"/>
</dbReference>
<dbReference type="GO" id="GO:0009432">
    <property type="term" value="P:SOS response"/>
    <property type="evidence" value="ECO:0007669"/>
    <property type="project" value="TreeGrafter"/>
</dbReference>
<dbReference type="CDD" id="cd03586">
    <property type="entry name" value="PolY_Pol_IV_kappa"/>
    <property type="match status" value="1"/>
</dbReference>
<dbReference type="FunFam" id="1.10.150.20:FF:000019">
    <property type="entry name" value="DNA polymerase IV"/>
    <property type="match status" value="1"/>
</dbReference>
<dbReference type="FunFam" id="3.30.70.270:FF:000002">
    <property type="entry name" value="DNA polymerase IV"/>
    <property type="match status" value="1"/>
</dbReference>
<dbReference type="FunFam" id="3.40.1170.60:FF:000001">
    <property type="entry name" value="DNA polymerase IV"/>
    <property type="match status" value="1"/>
</dbReference>
<dbReference type="Gene3D" id="3.30.70.270">
    <property type="match status" value="1"/>
</dbReference>
<dbReference type="Gene3D" id="3.40.1170.60">
    <property type="match status" value="1"/>
</dbReference>
<dbReference type="Gene3D" id="1.10.150.20">
    <property type="entry name" value="5' to 3' exonuclease, C-terminal subdomain"/>
    <property type="match status" value="1"/>
</dbReference>
<dbReference type="Gene3D" id="3.30.1490.100">
    <property type="entry name" value="DNA polymerase, Y-family, little finger domain"/>
    <property type="match status" value="1"/>
</dbReference>
<dbReference type="HAMAP" id="MF_01113">
    <property type="entry name" value="DNApol_IV"/>
    <property type="match status" value="1"/>
</dbReference>
<dbReference type="InterPro" id="IPR043502">
    <property type="entry name" value="DNA/RNA_pol_sf"/>
</dbReference>
<dbReference type="InterPro" id="IPR036775">
    <property type="entry name" value="DNA_pol_Y-fam_lit_finger_sf"/>
</dbReference>
<dbReference type="InterPro" id="IPR017961">
    <property type="entry name" value="DNA_pol_Y-fam_little_finger"/>
</dbReference>
<dbReference type="InterPro" id="IPR050116">
    <property type="entry name" value="DNA_polymerase-Y"/>
</dbReference>
<dbReference type="InterPro" id="IPR022880">
    <property type="entry name" value="DNApol_IV"/>
</dbReference>
<dbReference type="InterPro" id="IPR053848">
    <property type="entry name" value="IMS_HHH_1"/>
</dbReference>
<dbReference type="InterPro" id="IPR043128">
    <property type="entry name" value="Rev_trsase/Diguanyl_cyclase"/>
</dbReference>
<dbReference type="InterPro" id="IPR001126">
    <property type="entry name" value="UmuC"/>
</dbReference>
<dbReference type="NCBIfam" id="NF002677">
    <property type="entry name" value="PRK02406.1"/>
    <property type="match status" value="1"/>
</dbReference>
<dbReference type="PANTHER" id="PTHR11076:SF33">
    <property type="entry name" value="DNA POLYMERASE KAPPA"/>
    <property type="match status" value="1"/>
</dbReference>
<dbReference type="PANTHER" id="PTHR11076">
    <property type="entry name" value="DNA REPAIR POLYMERASE UMUC / TRANSFERASE FAMILY MEMBER"/>
    <property type="match status" value="1"/>
</dbReference>
<dbReference type="Pfam" id="PF00817">
    <property type="entry name" value="IMS"/>
    <property type="match status" value="1"/>
</dbReference>
<dbReference type="Pfam" id="PF11799">
    <property type="entry name" value="IMS_C"/>
    <property type="match status" value="1"/>
</dbReference>
<dbReference type="Pfam" id="PF21999">
    <property type="entry name" value="IMS_HHH_1"/>
    <property type="match status" value="1"/>
</dbReference>
<dbReference type="SUPFAM" id="SSF56672">
    <property type="entry name" value="DNA/RNA polymerases"/>
    <property type="match status" value="1"/>
</dbReference>
<dbReference type="SUPFAM" id="SSF100879">
    <property type="entry name" value="Lesion bypass DNA polymerase (Y-family), little finger domain"/>
    <property type="match status" value="1"/>
</dbReference>
<dbReference type="PROSITE" id="PS50173">
    <property type="entry name" value="UMUC"/>
    <property type="match status" value="1"/>
</dbReference>
<name>DPO4_SHESR</name>
<evidence type="ECO:0000255" key="1">
    <source>
        <dbReference type="HAMAP-Rule" id="MF_01113"/>
    </source>
</evidence>
<proteinExistence type="inferred from homology"/>
<comment type="function">
    <text evidence="1">Poorly processive, error-prone DNA polymerase involved in untargeted mutagenesis. Copies undamaged DNA at stalled replication forks, which arise in vivo from mismatched or misaligned primer ends. These misaligned primers can be extended by PolIV. Exhibits no 3'-5' exonuclease (proofreading) activity. May be involved in translesional synthesis, in conjunction with the beta clamp from PolIII.</text>
</comment>
<comment type="catalytic activity">
    <reaction evidence="1">
        <text>DNA(n) + a 2'-deoxyribonucleoside 5'-triphosphate = DNA(n+1) + diphosphate</text>
        <dbReference type="Rhea" id="RHEA:22508"/>
        <dbReference type="Rhea" id="RHEA-COMP:17339"/>
        <dbReference type="Rhea" id="RHEA-COMP:17340"/>
        <dbReference type="ChEBI" id="CHEBI:33019"/>
        <dbReference type="ChEBI" id="CHEBI:61560"/>
        <dbReference type="ChEBI" id="CHEBI:173112"/>
        <dbReference type="EC" id="2.7.7.7"/>
    </reaction>
</comment>
<comment type="cofactor">
    <cofactor evidence="1">
        <name>Mg(2+)</name>
        <dbReference type="ChEBI" id="CHEBI:18420"/>
    </cofactor>
    <text evidence="1">Binds 2 magnesium ions per subunit.</text>
</comment>
<comment type="subunit">
    <text evidence="1">Monomer.</text>
</comment>
<comment type="subcellular location">
    <subcellularLocation>
        <location evidence="1">Cytoplasm</location>
    </subcellularLocation>
</comment>
<comment type="similarity">
    <text evidence="1">Belongs to the DNA polymerase type-Y family.</text>
</comment>